<proteinExistence type="inferred from homology"/>
<name>ISPG_PASMU</name>
<keyword id="KW-0004">4Fe-4S</keyword>
<keyword id="KW-0408">Iron</keyword>
<keyword id="KW-0411">Iron-sulfur</keyword>
<keyword id="KW-0414">Isoprene biosynthesis</keyword>
<keyword id="KW-0479">Metal-binding</keyword>
<keyword id="KW-0560">Oxidoreductase</keyword>
<keyword id="KW-1185">Reference proteome</keyword>
<accession>P57987</accession>
<dbReference type="EC" id="1.17.7.3" evidence="1"/>
<dbReference type="EMBL" id="AE004439">
    <property type="protein sequence ID" value="AAK04094.1"/>
    <property type="molecule type" value="Genomic_DNA"/>
</dbReference>
<dbReference type="RefSeq" id="WP_005719572.1">
    <property type="nucleotide sequence ID" value="NC_002663.1"/>
</dbReference>
<dbReference type="SMR" id="P57987"/>
<dbReference type="STRING" id="272843.PM2010"/>
<dbReference type="EnsemblBacteria" id="AAK04094">
    <property type="protein sequence ID" value="AAK04094"/>
    <property type="gene ID" value="PM2010"/>
</dbReference>
<dbReference type="GeneID" id="77207336"/>
<dbReference type="KEGG" id="pmu:PM2010"/>
<dbReference type="PATRIC" id="fig|272843.6.peg.2033"/>
<dbReference type="HOGENOM" id="CLU_042258_0_0_6"/>
<dbReference type="UniPathway" id="UPA00056">
    <property type="reaction ID" value="UER00096"/>
</dbReference>
<dbReference type="Proteomes" id="UP000000809">
    <property type="component" value="Chromosome"/>
</dbReference>
<dbReference type="GO" id="GO:0051539">
    <property type="term" value="F:4 iron, 4 sulfur cluster binding"/>
    <property type="evidence" value="ECO:0007669"/>
    <property type="project" value="UniProtKB-UniRule"/>
</dbReference>
<dbReference type="GO" id="GO:0046429">
    <property type="term" value="F:4-hydroxy-3-methylbut-2-en-1-yl diphosphate synthase activity (ferredoxin)"/>
    <property type="evidence" value="ECO:0007669"/>
    <property type="project" value="UniProtKB-UniRule"/>
</dbReference>
<dbReference type="GO" id="GO:0141197">
    <property type="term" value="F:4-hydroxy-3-methylbut-2-enyl-diphosphate synthase activity (flavodoxin)"/>
    <property type="evidence" value="ECO:0007669"/>
    <property type="project" value="UniProtKB-EC"/>
</dbReference>
<dbReference type="GO" id="GO:0005506">
    <property type="term" value="F:iron ion binding"/>
    <property type="evidence" value="ECO:0007669"/>
    <property type="project" value="InterPro"/>
</dbReference>
<dbReference type="GO" id="GO:0019288">
    <property type="term" value="P:isopentenyl diphosphate biosynthetic process, methylerythritol 4-phosphate pathway"/>
    <property type="evidence" value="ECO:0007669"/>
    <property type="project" value="UniProtKB-UniRule"/>
</dbReference>
<dbReference type="GO" id="GO:0016114">
    <property type="term" value="P:terpenoid biosynthetic process"/>
    <property type="evidence" value="ECO:0007669"/>
    <property type="project" value="InterPro"/>
</dbReference>
<dbReference type="FunFam" id="3.20.20.20:FF:000001">
    <property type="entry name" value="4-hydroxy-3-methylbut-2-en-1-yl diphosphate synthase (flavodoxin)"/>
    <property type="match status" value="1"/>
</dbReference>
<dbReference type="FunFam" id="3.30.413.10:FF:000002">
    <property type="entry name" value="4-hydroxy-3-methylbut-2-en-1-yl diphosphate synthase (flavodoxin)"/>
    <property type="match status" value="1"/>
</dbReference>
<dbReference type="Gene3D" id="3.20.20.20">
    <property type="entry name" value="Dihydropteroate synthase-like"/>
    <property type="match status" value="1"/>
</dbReference>
<dbReference type="Gene3D" id="3.30.413.10">
    <property type="entry name" value="Sulfite Reductase Hemoprotein, domain 1"/>
    <property type="match status" value="1"/>
</dbReference>
<dbReference type="HAMAP" id="MF_00159">
    <property type="entry name" value="IspG"/>
    <property type="match status" value="1"/>
</dbReference>
<dbReference type="InterPro" id="IPR011005">
    <property type="entry name" value="Dihydropteroate_synth-like_sf"/>
</dbReference>
<dbReference type="InterPro" id="IPR016425">
    <property type="entry name" value="IspG_bac"/>
</dbReference>
<dbReference type="InterPro" id="IPR004588">
    <property type="entry name" value="IspG_bac-typ"/>
</dbReference>
<dbReference type="InterPro" id="IPR045854">
    <property type="entry name" value="NO2/SO3_Rdtase_4Fe4S_sf"/>
</dbReference>
<dbReference type="NCBIfam" id="TIGR00612">
    <property type="entry name" value="ispG_gcpE"/>
    <property type="match status" value="1"/>
</dbReference>
<dbReference type="NCBIfam" id="NF001540">
    <property type="entry name" value="PRK00366.1"/>
    <property type="match status" value="1"/>
</dbReference>
<dbReference type="PANTHER" id="PTHR30454">
    <property type="entry name" value="4-HYDROXY-3-METHYLBUT-2-EN-1-YL DIPHOSPHATE SYNTHASE"/>
    <property type="match status" value="1"/>
</dbReference>
<dbReference type="PANTHER" id="PTHR30454:SF0">
    <property type="entry name" value="4-HYDROXY-3-METHYLBUT-2-EN-1-YL DIPHOSPHATE SYNTHASE (FERREDOXIN), CHLOROPLASTIC"/>
    <property type="match status" value="1"/>
</dbReference>
<dbReference type="Pfam" id="PF04551">
    <property type="entry name" value="GcpE"/>
    <property type="match status" value="1"/>
</dbReference>
<dbReference type="PIRSF" id="PIRSF004640">
    <property type="entry name" value="IspG"/>
    <property type="match status" value="1"/>
</dbReference>
<dbReference type="SUPFAM" id="SSF51717">
    <property type="entry name" value="Dihydropteroate synthetase-like"/>
    <property type="match status" value="1"/>
</dbReference>
<dbReference type="SUPFAM" id="SSF56014">
    <property type="entry name" value="Nitrite and sulphite reductase 4Fe-4S domain-like"/>
    <property type="match status" value="1"/>
</dbReference>
<comment type="function">
    <text evidence="1">Converts 2C-methyl-D-erythritol 2,4-cyclodiphosphate (ME-2,4cPP) into 1-hydroxy-2-methyl-2-(E)-butenyl 4-diphosphate.</text>
</comment>
<comment type="catalytic activity">
    <reaction evidence="1">
        <text>(2E)-4-hydroxy-3-methylbut-2-enyl diphosphate + oxidized [flavodoxin] + H2O + 2 H(+) = 2-C-methyl-D-erythritol 2,4-cyclic diphosphate + reduced [flavodoxin]</text>
        <dbReference type="Rhea" id="RHEA:43604"/>
        <dbReference type="Rhea" id="RHEA-COMP:10622"/>
        <dbReference type="Rhea" id="RHEA-COMP:10623"/>
        <dbReference type="ChEBI" id="CHEBI:15377"/>
        <dbReference type="ChEBI" id="CHEBI:15378"/>
        <dbReference type="ChEBI" id="CHEBI:57618"/>
        <dbReference type="ChEBI" id="CHEBI:58210"/>
        <dbReference type="ChEBI" id="CHEBI:58483"/>
        <dbReference type="ChEBI" id="CHEBI:128753"/>
        <dbReference type="EC" id="1.17.7.3"/>
    </reaction>
</comment>
<comment type="cofactor">
    <cofactor evidence="1">
        <name>[4Fe-4S] cluster</name>
        <dbReference type="ChEBI" id="CHEBI:49883"/>
    </cofactor>
    <text evidence="1">Binds 1 [4Fe-4S] cluster.</text>
</comment>
<comment type="pathway">
    <text evidence="1">Isoprenoid biosynthesis; isopentenyl diphosphate biosynthesis via DXP pathway; isopentenyl diphosphate from 1-deoxy-D-xylulose 5-phosphate: step 5/6.</text>
</comment>
<comment type="similarity">
    <text evidence="1">Belongs to the IspG family.</text>
</comment>
<protein>
    <recommendedName>
        <fullName evidence="1">4-hydroxy-3-methylbut-2-en-1-yl diphosphate synthase (flavodoxin)</fullName>
        <ecNumber evidence="1">1.17.7.3</ecNumber>
    </recommendedName>
    <alternativeName>
        <fullName evidence="1">1-hydroxy-2-methyl-2-(E)-butenyl 4-diphosphate synthase</fullName>
    </alternativeName>
</protein>
<gene>
    <name evidence="1" type="primary">ispG</name>
    <name type="synonym">gcpE</name>
    <name type="ordered locus">PM2010</name>
</gene>
<sequence>MLAKPTIKRRESTKIYVGNVPIGGDAPIAVQSMTNTRTTDVEATVAQIKALERVGADIVRVSVPTMDAAEAFKLIKQQVNVPLVADIHFDYRIALKVAEYGVDCLRINPGNIGREDRIRAVVDCARDNNIPIRIGVNAGSLEKDLQEKYGEPTPEALLESALRHVEILDRLNFDQFKVSVKASDVFLAVESYRLLAKAIKQPLHLGITEAGGFRAGAVKSAVGLGMLLAEGIGDTLRISLAADPVEEIKVGFDILKSLRIRSRGINFIACPTCSRQEFDVIGTVNALEQRLEDIITPMDVSIIGCVVNGPGEALVSDLGVTGGNKKSGYYLDGERQKERFDNDDLINQLEAKIRAKVAAQDPKNRII</sequence>
<evidence type="ECO:0000255" key="1">
    <source>
        <dbReference type="HAMAP-Rule" id="MF_00159"/>
    </source>
</evidence>
<organism>
    <name type="scientific">Pasteurella multocida (strain Pm70)</name>
    <dbReference type="NCBI Taxonomy" id="272843"/>
    <lineage>
        <taxon>Bacteria</taxon>
        <taxon>Pseudomonadati</taxon>
        <taxon>Pseudomonadota</taxon>
        <taxon>Gammaproteobacteria</taxon>
        <taxon>Pasteurellales</taxon>
        <taxon>Pasteurellaceae</taxon>
        <taxon>Pasteurella</taxon>
    </lineage>
</organism>
<reference key="1">
    <citation type="journal article" date="2001" name="Proc. Natl. Acad. Sci. U.S.A.">
        <title>Complete genomic sequence of Pasteurella multocida Pm70.</title>
        <authorList>
            <person name="May B.J."/>
            <person name="Zhang Q."/>
            <person name="Li L.L."/>
            <person name="Paustian M.L."/>
            <person name="Whittam T.S."/>
            <person name="Kapur V."/>
        </authorList>
    </citation>
    <scope>NUCLEOTIDE SEQUENCE [LARGE SCALE GENOMIC DNA]</scope>
    <source>
        <strain>Pm70</strain>
    </source>
</reference>
<feature type="chain" id="PRO_0000190609" description="4-hydroxy-3-methylbut-2-en-1-yl diphosphate synthase (flavodoxin)">
    <location>
        <begin position="1"/>
        <end position="367"/>
    </location>
</feature>
<feature type="binding site" evidence="1">
    <location>
        <position position="270"/>
    </location>
    <ligand>
        <name>[4Fe-4S] cluster</name>
        <dbReference type="ChEBI" id="CHEBI:49883"/>
    </ligand>
</feature>
<feature type="binding site" evidence="1">
    <location>
        <position position="273"/>
    </location>
    <ligand>
        <name>[4Fe-4S] cluster</name>
        <dbReference type="ChEBI" id="CHEBI:49883"/>
    </ligand>
</feature>
<feature type="binding site" evidence="1">
    <location>
        <position position="305"/>
    </location>
    <ligand>
        <name>[4Fe-4S] cluster</name>
        <dbReference type="ChEBI" id="CHEBI:49883"/>
    </ligand>
</feature>
<feature type="binding site" evidence="1">
    <location>
        <position position="312"/>
    </location>
    <ligand>
        <name>[4Fe-4S] cluster</name>
        <dbReference type="ChEBI" id="CHEBI:49883"/>
    </ligand>
</feature>